<reference evidence="8" key="1">
    <citation type="journal article" date="2017" name="Elife">
        <title>wtf genes are prolific dual poison-antidote meiotic drivers.</title>
        <authorList>
            <person name="Nuckolls N.L."/>
            <person name="Bravo Nunez M.A."/>
            <person name="Eickbush M.T."/>
            <person name="Young J.M."/>
            <person name="Lange J.J."/>
            <person name="Yu J.S."/>
            <person name="Smith G.R."/>
            <person name="Jaspersen S.L."/>
            <person name="Malik H.S."/>
            <person name="Zanders S.E."/>
        </authorList>
    </citation>
    <scope>NUCLEOTIDE SEQUENCE [GENOMIC DNA]</scope>
</reference>
<reference evidence="7" key="2">
    <citation type="journal article" date="2018" name="PLoS Genet.">
        <title>A suppressor of a wtf poison-antidote meiotic driver acts via mimicry of the driver's antidote.</title>
        <authorList>
            <person name="Bravo Nunez M.A."/>
            <person name="Lange J.J."/>
            <person name="Zanders S.E."/>
        </authorList>
    </citation>
    <scope>FUNCTION</scope>
</reference>
<sequence>MKNNYTSLKSPLDEEDELKTDHEIDLEKGLLPEYNSEEEGTLPLYSDISKLANPVPEDSSTGPTEIANPNVERRQEFKDSHPNIYFLLRLLISVLAVSVVFFTAWVCVNPLEKSIFGKVAFSVTIGITCPILFIATFCFFETWTQAVAQCIKVTVIFLAQCVKVTVIFLAQCVKVTAVFLAKCVKVIAVGLYNSKKDLVVTIWLAWVVICFILFGCVKDGRLNLNKALICSTCSISAALFFILLLVCIPIWTLKHMLFGLFQVLGVQSCVVIVTKGLMYLFDKHIDATGYEIEASSLFVIGNFLFFYEMERPGALKRMPKFIGNGIASFLGGLGNAFGGIGNAIGRIGNAFRGANDNNDIPLGEMDVESEV</sequence>
<dbReference type="EMBL" id="MH837444">
    <property type="protein sequence ID" value="QBL54507.1"/>
    <property type="molecule type" value="Genomic_DNA"/>
</dbReference>
<dbReference type="SMR" id="A0A482ARE1"/>
<dbReference type="GO" id="GO:0005737">
    <property type="term" value="C:cytoplasm"/>
    <property type="evidence" value="ECO:0000305"/>
    <property type="project" value="UniProtKB"/>
</dbReference>
<dbReference type="GO" id="GO:0005774">
    <property type="term" value="C:vacuolar membrane"/>
    <property type="evidence" value="ECO:0007669"/>
    <property type="project" value="UniProtKB-SubCell"/>
</dbReference>
<dbReference type="GO" id="GO:0110134">
    <property type="term" value="P:meiotic drive"/>
    <property type="evidence" value="ECO:0000316"/>
    <property type="project" value="UniProtKB"/>
</dbReference>
<dbReference type="InterPro" id="IPR004982">
    <property type="entry name" value="WTF"/>
</dbReference>
<dbReference type="Pfam" id="PF03303">
    <property type="entry name" value="WTF"/>
    <property type="match status" value="2"/>
</dbReference>
<organism evidence="8">
    <name type="scientific">Schizosaccharomyces kambucha</name>
    <name type="common">Fission yeast</name>
    <dbReference type="NCBI Taxonomy" id="204045"/>
    <lineage>
        <taxon>Eukaryota</taxon>
        <taxon>Fungi</taxon>
        <taxon>Dikarya</taxon>
        <taxon>Ascomycota</taxon>
        <taxon>Taphrinomycotina</taxon>
        <taxon>Schizosaccharomycetes</taxon>
        <taxon>Schizosaccharomycetales</taxon>
        <taxon>Schizosaccharomycetaceae</taxon>
        <taxon>Schizosaccharomyces</taxon>
    </lineage>
</organism>
<protein>
    <recommendedName>
        <fullName evidence="6">Meiotic drive suppressor wtf18</fullName>
    </recommendedName>
</protein>
<keyword id="KW-0472">Membrane</keyword>
<keyword id="KW-0812">Transmembrane</keyword>
<keyword id="KW-1133">Transmembrane helix</keyword>
<keyword id="KW-0926">Vacuole</keyword>
<gene>
    <name evidence="8" type="primary">wtf18</name>
</gene>
<accession>A0A482ARE1</accession>
<comment type="function">
    <text evidence="1 2 5">Acts as a suppressor component of the dual wtf meiotic drive system, and can suppress but not confer meiotic drive by compatible poisons (PubMed:30475921). Wtf meiotic drive systems promote unequal transmission of alleles from the parental zygote to progeny spores by encoding a poison and an antidote from the same locus; the poison is trans-acting and forms toxic aggregates in all spores within an ascus, wherease the antidote is spore-specific and targets aggregates for degradation by the vacuole (By similarity). Meiotic drive by wtf systems therefore lead to poisoning of all progeny that do not inherit the dual poison/antidote allele, or express a compatible antidote (By similarity).</text>
</comment>
<comment type="subunit">
    <text evidence="1 3">Homomer (By similarity). Interacts with other proteins that exhibit high sequence similarity (By similarity).</text>
</comment>
<comment type="subcellular location">
    <subcellularLocation>
        <location evidence="1 4">Spore membrane</location>
        <topology evidence="4">Multi-pass membrane protein</topology>
    </subcellularLocation>
    <subcellularLocation>
        <location evidence="1 4">Vacuole membrane</location>
        <topology evidence="4">Multi-pass membrane protein</topology>
    </subcellularLocation>
</comment>
<comment type="similarity">
    <text evidence="7">Belongs to the WTF family.</text>
</comment>
<proteinExistence type="inferred from homology"/>
<evidence type="ECO:0000250" key="1">
    <source>
        <dbReference type="UniProtKB" id="A0A218N034"/>
    </source>
</evidence>
<evidence type="ECO:0000250" key="2">
    <source>
        <dbReference type="UniProtKB" id="A0A482ATU4"/>
    </source>
</evidence>
<evidence type="ECO:0000250" key="3">
    <source>
        <dbReference type="UniProtKB" id="O74420"/>
    </source>
</evidence>
<evidence type="ECO:0000255" key="4"/>
<evidence type="ECO:0000269" key="5">
    <source>
    </source>
</evidence>
<evidence type="ECO:0000303" key="6">
    <source>
    </source>
</evidence>
<evidence type="ECO:0000305" key="7"/>
<evidence type="ECO:0000312" key="8">
    <source>
        <dbReference type="EMBL" id="QBL54507.1"/>
    </source>
</evidence>
<feature type="chain" id="PRO_0000452263" description="Meiotic drive suppressor wtf18">
    <location>
        <begin position="1"/>
        <end position="371"/>
    </location>
</feature>
<feature type="transmembrane region" description="Helical" evidence="4">
    <location>
        <begin position="86"/>
        <end position="106"/>
    </location>
</feature>
<feature type="transmembrane region" description="Helical" evidence="4">
    <location>
        <begin position="120"/>
        <end position="140"/>
    </location>
</feature>
<feature type="transmembrane region" description="Helical" evidence="4">
    <location>
        <begin position="153"/>
        <end position="173"/>
    </location>
</feature>
<feature type="transmembrane region" description="Helical" evidence="4">
    <location>
        <begin position="197"/>
        <end position="217"/>
    </location>
</feature>
<feature type="transmembrane region" description="Helical" evidence="4">
    <location>
        <begin position="233"/>
        <end position="253"/>
    </location>
</feature>
<feature type="transmembrane region" description="Helical" evidence="4">
    <location>
        <begin position="257"/>
        <end position="277"/>
    </location>
</feature>
<feature type="transmembrane region" description="Helical" evidence="4">
    <location>
        <begin position="287"/>
        <end position="307"/>
    </location>
</feature>
<feature type="transmembrane region" description="Helical" evidence="4">
    <location>
        <begin position="321"/>
        <end position="341"/>
    </location>
</feature>
<name>WTF18_SCHKA</name>